<evidence type="ECO:0000250" key="1">
    <source>
        <dbReference type="UniProtKB" id="O43623"/>
    </source>
</evidence>
<evidence type="ECO:0000255" key="2">
    <source>
        <dbReference type="PROSITE-ProRule" id="PRU00042"/>
    </source>
</evidence>
<evidence type="ECO:0000256" key="3">
    <source>
        <dbReference type="SAM" id="MobiDB-lite"/>
    </source>
</evidence>
<evidence type="ECO:0000305" key="4"/>
<keyword id="KW-0963">Cytoplasm</keyword>
<keyword id="KW-0217">Developmental protein</keyword>
<keyword id="KW-0238">DNA-binding</keyword>
<keyword id="KW-0479">Metal-binding</keyword>
<keyword id="KW-0539">Nucleus</keyword>
<keyword id="KW-1185">Reference proteome</keyword>
<keyword id="KW-0677">Repeat</keyword>
<keyword id="KW-0678">Repressor</keyword>
<keyword id="KW-0804">Transcription</keyword>
<keyword id="KW-0805">Transcription regulation</keyword>
<keyword id="KW-0832">Ubl conjugation</keyword>
<keyword id="KW-0862">Zinc</keyword>
<keyword id="KW-0863">Zinc-finger</keyword>
<feature type="chain" id="PRO_0000259420" description="Zinc finger protein SNAI2">
    <location>
        <begin position="1"/>
        <end position="268"/>
    </location>
</feature>
<feature type="zinc finger region" description="C2H2-type 1" evidence="2">
    <location>
        <begin position="128"/>
        <end position="150"/>
    </location>
</feature>
<feature type="zinc finger region" description="C2H2-type 2" evidence="2">
    <location>
        <begin position="159"/>
        <end position="181"/>
    </location>
</feature>
<feature type="zinc finger region" description="C2H2-type 3" evidence="2">
    <location>
        <begin position="185"/>
        <end position="207"/>
    </location>
</feature>
<feature type="zinc finger region" description="C2H2-type 4" evidence="2">
    <location>
        <begin position="213"/>
        <end position="235"/>
    </location>
</feature>
<feature type="zinc finger region" description="C2H2-type 5; atypical" evidence="2">
    <location>
        <begin position="241"/>
        <end position="264"/>
    </location>
</feature>
<feature type="region of interest" description="SNAG domain" evidence="1">
    <location>
        <begin position="1"/>
        <end position="20"/>
    </location>
</feature>
<feature type="region of interest" description="Disordered" evidence="3">
    <location>
        <begin position="80"/>
        <end position="117"/>
    </location>
</feature>
<comment type="function">
    <text evidence="1">Transcriptional repressor that modulates both activator-dependent and basal transcription. Involved in the generation and migration of neural crest cells. Plays a role in mediating RAF1-induced transcriptional repression of the TJ protein, occludin (OCLN) and subsequent oncogenic transformation of epithelial cells. Represses BRCA2 expression by binding to its E2-box-containing silencer and recruiting CTBP1 and HDAC1 in breast cells. In epidermal keratinocytes, binds to the E-box in ITGA3 promoter and represses its transcription. Involved in the regulation of ITGB1 and ITGB4 expression and cell adhesion and proliferation in epidermal keratinocytes. Binds to E-box2 domain of BSG and activates its expression during TGFB1-induced epithelial-mesenchymal transition (EMT) in hepatocytes. Represses E-Cadherin/CDH1 transcription via E-box elements. Involved in osteoblast maturation. Binds to RUNX2 and SOC9 promoters and may act as a positive and negative transcription regulator, respectively, in osteoblasts. Binds to CXCL12 promoter via E-box regions in mesenchymal stem cells and osteoblasts. Plays an essential role in TWIST1-induced EMT and its ability to promote invasion and metastasis (By similarity).</text>
</comment>
<comment type="subunit">
    <text evidence="1">Interacts (via SNAG domain) with LIMD1 (via LIM domains), WTIP (via LIM domains) and AJUBA (via LIM domains) (By similarity). Interacts (via zinc fingers) with KPNA2, KPNB1, and TNPO1. May interact (via zinc fingers) with IPO7 (By similarity).</text>
</comment>
<comment type="subcellular location">
    <subcellularLocation>
        <location evidence="1">Nucleus</location>
    </subcellularLocation>
    <subcellularLocation>
        <location evidence="1">Cytoplasm</location>
    </subcellularLocation>
    <text evidence="1">Observed in discrete foci in interphase nuclei. These nuclear foci do not overlap with the nucleoli, the SP100 and the HP1 heterochromatin or the coiled body, suggesting SNAI2 is associated with active transcription or active splicing regions (By similarity).</text>
</comment>
<comment type="domain">
    <text evidence="1">Repression activity depends on the C-terminal DNA-binding zinc fingers and on the N-terminal repression domain.</text>
</comment>
<comment type="PTM">
    <text evidence="1">Phosphorylated by GSK3B. Once phosphorylated, it becomes a target for ubiquitination.</text>
</comment>
<comment type="PTM">
    <text evidence="1">Ubiquitinated by the SCF(FBXO11) complex; ubiquitination requires previous GSK3B-mediated SNAI2 phosphorylation.</text>
</comment>
<comment type="similarity">
    <text evidence="4">Belongs to the snail C2H2-type zinc-finger protein family.</text>
</comment>
<organism>
    <name type="scientific">Bos taurus</name>
    <name type="common">Bovine</name>
    <dbReference type="NCBI Taxonomy" id="9913"/>
    <lineage>
        <taxon>Eukaryota</taxon>
        <taxon>Metazoa</taxon>
        <taxon>Chordata</taxon>
        <taxon>Craniata</taxon>
        <taxon>Vertebrata</taxon>
        <taxon>Euteleostomi</taxon>
        <taxon>Mammalia</taxon>
        <taxon>Eutheria</taxon>
        <taxon>Laurasiatheria</taxon>
        <taxon>Artiodactyla</taxon>
        <taxon>Ruminantia</taxon>
        <taxon>Pecora</taxon>
        <taxon>Bovidae</taxon>
        <taxon>Bovinae</taxon>
        <taxon>Bos</taxon>
    </lineage>
</organism>
<gene>
    <name type="primary">SNAI2</name>
    <name type="synonym">SLUG</name>
</gene>
<protein>
    <recommendedName>
        <fullName>Zinc finger protein SNAI2</fullName>
    </recommendedName>
    <alternativeName>
        <fullName>Neural crest transcription factor Slug</fullName>
    </alternativeName>
    <alternativeName>
        <fullName>Protein snail homolog 2</fullName>
    </alternativeName>
</protein>
<reference key="1">
    <citation type="submission" date="2005-09" db="EMBL/GenBank/DDBJ databases">
        <authorList>
            <consortium name="NIH - Mammalian Gene Collection (MGC) project"/>
        </authorList>
    </citation>
    <scope>NUCLEOTIDE SEQUENCE [LARGE SCALE MRNA]</scope>
    <source>
        <strain>Crossbred X Angus</strain>
        <tissue>Ileum</tissue>
    </source>
</reference>
<proteinExistence type="evidence at transcript level"/>
<name>SNAI2_BOVIN</name>
<sequence length="268" mass="29729">MPRSFLVKKHFNASKKPNYSELDTHTVIISPCLYEGYPVPVIPQPEVLRSGAYSPIAVWTTASPFHAPLPAGLSPLSGYPASLGRVSPPPPSDTSSKDHSGSESPISDEEERLQSKLSDPHAIEAEKFQCNLCNKTYSTFSGLGKHKQLHCDAQSRKSFSCKYCDKEYVSLGALKMHIRTHTLPCVCKICGKAFSRPWLLQGHIRTHTGEKPFSCSHCSRAFADRSNLRAHLQTHSDVKKYQCKSCSKTFSRMSLLHKHEESGCCAAH</sequence>
<dbReference type="EMBL" id="BC105149">
    <property type="protein sequence ID" value="AAI05150.1"/>
    <property type="molecule type" value="mRNA"/>
</dbReference>
<dbReference type="RefSeq" id="NP_001029710.1">
    <property type="nucleotide sequence ID" value="NM_001034538.2"/>
</dbReference>
<dbReference type="SMR" id="Q3MHQ4"/>
<dbReference type="FunCoup" id="Q3MHQ4">
    <property type="interactions" value="534"/>
</dbReference>
<dbReference type="STRING" id="9913.ENSBTAP00000017600"/>
<dbReference type="PaxDb" id="9913-ENSBTAP00000017600"/>
<dbReference type="GeneID" id="520631"/>
<dbReference type="KEGG" id="bta:520631"/>
<dbReference type="CTD" id="6591"/>
<dbReference type="VEuPathDB" id="HostDB:ENSBTAG00000013227"/>
<dbReference type="eggNOG" id="KOG2462">
    <property type="taxonomic scope" value="Eukaryota"/>
</dbReference>
<dbReference type="HOGENOM" id="CLU_002678_42_3_1"/>
<dbReference type="InParanoid" id="Q3MHQ4"/>
<dbReference type="OMA" id="HFNSAKK"/>
<dbReference type="OrthoDB" id="5428132at2759"/>
<dbReference type="TreeFam" id="TF315515"/>
<dbReference type="Proteomes" id="UP000009136">
    <property type="component" value="Chromosome 14"/>
</dbReference>
<dbReference type="Bgee" id="ENSBTAG00000013227">
    <property type="expression patterns" value="Expressed in uterine cervix and 95 other cell types or tissues"/>
</dbReference>
<dbReference type="GO" id="GO:0005737">
    <property type="term" value="C:cytoplasm"/>
    <property type="evidence" value="ECO:0007669"/>
    <property type="project" value="UniProtKB-SubCell"/>
</dbReference>
<dbReference type="GO" id="GO:0005634">
    <property type="term" value="C:nucleus"/>
    <property type="evidence" value="ECO:0000250"/>
    <property type="project" value="UniProtKB"/>
</dbReference>
<dbReference type="GO" id="GO:0000981">
    <property type="term" value="F:DNA-binding transcription factor activity, RNA polymerase II-specific"/>
    <property type="evidence" value="ECO:0000318"/>
    <property type="project" value="GO_Central"/>
</dbReference>
<dbReference type="GO" id="GO:0000978">
    <property type="term" value="F:RNA polymerase II cis-regulatory region sequence-specific DNA binding"/>
    <property type="evidence" value="ECO:0000318"/>
    <property type="project" value="GO_Central"/>
</dbReference>
<dbReference type="GO" id="GO:0008270">
    <property type="term" value="F:zinc ion binding"/>
    <property type="evidence" value="ECO:0007669"/>
    <property type="project" value="UniProtKB-KW"/>
</dbReference>
<dbReference type="GO" id="GO:0006355">
    <property type="term" value="P:regulation of DNA-templated transcription"/>
    <property type="evidence" value="ECO:0000318"/>
    <property type="project" value="GO_Central"/>
</dbReference>
<dbReference type="FunFam" id="3.30.160.60:FF:000085">
    <property type="entry name" value="Snail zinc finger protein"/>
    <property type="match status" value="1"/>
</dbReference>
<dbReference type="FunFam" id="3.30.160.60:FF:000942">
    <property type="entry name" value="Snail zinc finger protein"/>
    <property type="match status" value="1"/>
</dbReference>
<dbReference type="FunFam" id="3.30.160.60:FF:001114">
    <property type="entry name" value="Zinc finger protein SNAI2"/>
    <property type="match status" value="1"/>
</dbReference>
<dbReference type="FunFam" id="3.30.160.60:FF:000207">
    <property type="entry name" value="zinc finger protein SNAI2"/>
    <property type="match status" value="1"/>
</dbReference>
<dbReference type="Gene3D" id="3.30.160.60">
    <property type="entry name" value="Classic Zinc Finger"/>
    <property type="match status" value="4"/>
</dbReference>
<dbReference type="InterPro" id="IPR050527">
    <property type="entry name" value="Snail/Krueppel_Znf"/>
</dbReference>
<dbReference type="InterPro" id="IPR036236">
    <property type="entry name" value="Znf_C2H2_sf"/>
</dbReference>
<dbReference type="InterPro" id="IPR013087">
    <property type="entry name" value="Znf_C2H2_type"/>
</dbReference>
<dbReference type="PANTHER" id="PTHR24388">
    <property type="entry name" value="ZINC FINGER PROTEIN"/>
    <property type="match status" value="1"/>
</dbReference>
<dbReference type="PANTHER" id="PTHR24388:SF42">
    <property type="entry name" value="ZINC FINGER PROTEIN SNAI2"/>
    <property type="match status" value="1"/>
</dbReference>
<dbReference type="Pfam" id="PF00096">
    <property type="entry name" value="zf-C2H2"/>
    <property type="match status" value="5"/>
</dbReference>
<dbReference type="SMART" id="SM00355">
    <property type="entry name" value="ZnF_C2H2"/>
    <property type="match status" value="5"/>
</dbReference>
<dbReference type="SUPFAM" id="SSF57667">
    <property type="entry name" value="beta-beta-alpha zinc fingers"/>
    <property type="match status" value="4"/>
</dbReference>
<dbReference type="PROSITE" id="PS00028">
    <property type="entry name" value="ZINC_FINGER_C2H2_1"/>
    <property type="match status" value="4"/>
</dbReference>
<dbReference type="PROSITE" id="PS50157">
    <property type="entry name" value="ZINC_FINGER_C2H2_2"/>
    <property type="match status" value="5"/>
</dbReference>
<accession>Q3MHQ4</accession>